<accession>Q70BM6</accession>
<proteinExistence type="evidence at protein level"/>
<protein>
    <recommendedName>
        <fullName>Organic anion transporter 3</fullName>
        <shortName>pOAT3</shortName>
    </recommendedName>
    <alternativeName>
        <fullName>Organic anion/dicarboxylate exchanger</fullName>
    </alternativeName>
    <alternativeName>
        <fullName>Solute carrier family 22 member 8</fullName>
    </alternativeName>
</protein>
<organism>
    <name type="scientific">Sus scrofa</name>
    <name type="common">Pig</name>
    <dbReference type="NCBI Taxonomy" id="9823"/>
    <lineage>
        <taxon>Eukaryota</taxon>
        <taxon>Metazoa</taxon>
        <taxon>Chordata</taxon>
        <taxon>Craniata</taxon>
        <taxon>Vertebrata</taxon>
        <taxon>Euteleostomi</taxon>
        <taxon>Mammalia</taxon>
        <taxon>Eutheria</taxon>
        <taxon>Laurasiatheria</taxon>
        <taxon>Artiodactyla</taxon>
        <taxon>Suina</taxon>
        <taxon>Suidae</taxon>
        <taxon>Sus</taxon>
    </lineage>
</organism>
<dbReference type="EMBL" id="AJ587003">
    <property type="protein sequence ID" value="CAE53047.1"/>
    <property type="molecule type" value="mRNA"/>
</dbReference>
<dbReference type="RefSeq" id="NP_999620.1">
    <property type="nucleotide sequence ID" value="NM_214455.1"/>
</dbReference>
<dbReference type="RefSeq" id="XP_005660832.1">
    <property type="nucleotide sequence ID" value="XM_005660775.2"/>
</dbReference>
<dbReference type="RefSeq" id="XP_005660834.1">
    <property type="nucleotide sequence ID" value="XM_005660777.3"/>
</dbReference>
<dbReference type="RefSeq" id="XP_013849646.1">
    <property type="nucleotide sequence ID" value="XM_013994192.2"/>
</dbReference>
<dbReference type="RefSeq" id="XP_013849647.1">
    <property type="nucleotide sequence ID" value="XM_013994193.2"/>
</dbReference>
<dbReference type="SMR" id="Q70BM6"/>
<dbReference type="FunCoup" id="Q70BM6">
    <property type="interactions" value="35"/>
</dbReference>
<dbReference type="STRING" id="9823.ENSSSCP00000033698"/>
<dbReference type="GlyCosmos" id="Q70BM6">
    <property type="glycosylation" value="1 site, No reported glycans"/>
</dbReference>
<dbReference type="GlyGen" id="Q70BM6">
    <property type="glycosylation" value="2 sites"/>
</dbReference>
<dbReference type="PaxDb" id="9823-ENSSSCP00000024173"/>
<dbReference type="PeptideAtlas" id="Q70BM6"/>
<dbReference type="Ensembl" id="ENSSSCT00000032013.3">
    <property type="protein sequence ID" value="ENSSSCP00000024173.1"/>
    <property type="gene ID" value="ENSSSCG00000029516.4"/>
</dbReference>
<dbReference type="Ensembl" id="ENSSSCT00015081350.1">
    <property type="protein sequence ID" value="ENSSSCP00015032916.1"/>
    <property type="gene ID" value="ENSSSCG00015060814.1"/>
</dbReference>
<dbReference type="Ensembl" id="ENSSSCT00025102474.1">
    <property type="protein sequence ID" value="ENSSSCP00025045347.1"/>
    <property type="gene ID" value="ENSSSCG00025074375.1"/>
</dbReference>
<dbReference type="Ensembl" id="ENSSSCT00030016495.1">
    <property type="protein sequence ID" value="ENSSSCP00030007396.1"/>
    <property type="gene ID" value="ENSSSCG00030011998.1"/>
</dbReference>
<dbReference type="Ensembl" id="ENSSSCT00035059724.1">
    <property type="protein sequence ID" value="ENSSSCP00035024012.1"/>
    <property type="gene ID" value="ENSSSCG00035044945.1"/>
</dbReference>
<dbReference type="Ensembl" id="ENSSSCT00040061205.1">
    <property type="protein sequence ID" value="ENSSSCP00040025729.1"/>
    <property type="gene ID" value="ENSSSCG00040045565.1"/>
</dbReference>
<dbReference type="Ensembl" id="ENSSSCT00045057285.1">
    <property type="protein sequence ID" value="ENSSSCP00045040042.1"/>
    <property type="gene ID" value="ENSSSCG00045033488.1"/>
</dbReference>
<dbReference type="Ensembl" id="ENSSSCT00050013766.1">
    <property type="protein sequence ID" value="ENSSSCP00050005674.1"/>
    <property type="gene ID" value="ENSSSCG00050010226.1"/>
</dbReference>
<dbReference type="Ensembl" id="ENSSSCT00055008416.1">
    <property type="protein sequence ID" value="ENSSSCP00055006659.1"/>
    <property type="gene ID" value="ENSSSCG00055004259.1"/>
</dbReference>
<dbReference type="Ensembl" id="ENSSSCT00060048360.1">
    <property type="protein sequence ID" value="ENSSSCP00060020716.1"/>
    <property type="gene ID" value="ENSSSCG00060035672.1"/>
</dbReference>
<dbReference type="Ensembl" id="ENSSSCT00065008947.1">
    <property type="protein sequence ID" value="ENSSSCP00065003766.1"/>
    <property type="gene ID" value="ENSSSCG00065006652.1"/>
</dbReference>
<dbReference type="Ensembl" id="ENSSSCT00105079644">
    <property type="protein sequence ID" value="ENSSSCP00105056354"/>
    <property type="gene ID" value="ENSSSCG00105041919"/>
</dbReference>
<dbReference type="Ensembl" id="ENSSSCT00110062774">
    <property type="protein sequence ID" value="ENSSSCP00110043996"/>
    <property type="gene ID" value="ENSSSCG00110032872"/>
</dbReference>
<dbReference type="Ensembl" id="ENSSSCT00115018640">
    <property type="protein sequence ID" value="ENSSSCP00115017619"/>
    <property type="gene ID" value="ENSSSCG00115010790"/>
</dbReference>
<dbReference type="Ensembl" id="ENSSSCT00130066082">
    <property type="protein sequence ID" value="ENSSSCP00130047378"/>
    <property type="gene ID" value="ENSSSCG00130033783"/>
</dbReference>
<dbReference type="GeneID" id="407774"/>
<dbReference type="KEGG" id="ssc:407774"/>
<dbReference type="CTD" id="9376"/>
<dbReference type="VGNC" id="VGNC:92984">
    <property type="gene designation" value="SLC22A8"/>
</dbReference>
<dbReference type="eggNOG" id="KOG0255">
    <property type="taxonomic scope" value="Eukaryota"/>
</dbReference>
<dbReference type="GeneTree" id="ENSGT00940000154901"/>
<dbReference type="HOGENOM" id="CLU_001265_33_3_1"/>
<dbReference type="InParanoid" id="Q70BM6"/>
<dbReference type="OMA" id="CGGLMPN"/>
<dbReference type="OrthoDB" id="2544694at2759"/>
<dbReference type="TreeFam" id="TF315847"/>
<dbReference type="Reactome" id="R-SSC-561048">
    <property type="pathway name" value="Organic anion transport"/>
</dbReference>
<dbReference type="Proteomes" id="UP000008227">
    <property type="component" value="Chromosome 2"/>
</dbReference>
<dbReference type="Proteomes" id="UP000314985">
    <property type="component" value="Unplaced"/>
</dbReference>
<dbReference type="Proteomes" id="UP000694570">
    <property type="component" value="Unplaced"/>
</dbReference>
<dbReference type="Proteomes" id="UP000694571">
    <property type="component" value="Unplaced"/>
</dbReference>
<dbReference type="Proteomes" id="UP000694720">
    <property type="component" value="Unplaced"/>
</dbReference>
<dbReference type="Proteomes" id="UP000694722">
    <property type="component" value="Unplaced"/>
</dbReference>
<dbReference type="Proteomes" id="UP000694723">
    <property type="component" value="Unplaced"/>
</dbReference>
<dbReference type="Proteomes" id="UP000694724">
    <property type="component" value="Unplaced"/>
</dbReference>
<dbReference type="Proteomes" id="UP000694725">
    <property type="component" value="Unplaced"/>
</dbReference>
<dbReference type="Proteomes" id="UP000694726">
    <property type="component" value="Unplaced"/>
</dbReference>
<dbReference type="Proteomes" id="UP000694727">
    <property type="component" value="Unplaced"/>
</dbReference>
<dbReference type="Proteomes" id="UP000694728">
    <property type="component" value="Unplaced"/>
</dbReference>
<dbReference type="Bgee" id="ENSSSCG00000029516">
    <property type="expression patterns" value="Expressed in adult mammalian kidney and 12 other cell types or tissues"/>
</dbReference>
<dbReference type="ExpressionAtlas" id="Q70BM6">
    <property type="expression patterns" value="baseline"/>
</dbReference>
<dbReference type="GO" id="GO:0016323">
    <property type="term" value="C:basolateral plasma membrane"/>
    <property type="evidence" value="ECO:0007669"/>
    <property type="project" value="UniProtKB-SubCell"/>
</dbReference>
<dbReference type="GO" id="GO:0015297">
    <property type="term" value="F:antiporter activity"/>
    <property type="evidence" value="ECO:0000250"/>
    <property type="project" value="UniProtKB"/>
</dbReference>
<dbReference type="GO" id="GO:0008514">
    <property type="term" value="F:organic anion transmembrane transporter activity"/>
    <property type="evidence" value="ECO:0000250"/>
    <property type="project" value="UniProtKB"/>
</dbReference>
<dbReference type="GO" id="GO:0042910">
    <property type="term" value="F:xenobiotic transmembrane transporter activity"/>
    <property type="evidence" value="ECO:0000250"/>
    <property type="project" value="UniProtKB"/>
</dbReference>
<dbReference type="GO" id="GO:0006811">
    <property type="term" value="P:monoatomic ion transport"/>
    <property type="evidence" value="ECO:0007669"/>
    <property type="project" value="UniProtKB-KW"/>
</dbReference>
<dbReference type="GO" id="GO:0015711">
    <property type="term" value="P:organic anion transport"/>
    <property type="evidence" value="ECO:0000318"/>
    <property type="project" value="GO_Central"/>
</dbReference>
<dbReference type="GO" id="GO:0015732">
    <property type="term" value="P:prostaglandin transport"/>
    <property type="evidence" value="ECO:0000250"/>
    <property type="project" value="UniProtKB"/>
</dbReference>
<dbReference type="GO" id="GO:0009636">
    <property type="term" value="P:response to toxic substance"/>
    <property type="evidence" value="ECO:0007669"/>
    <property type="project" value="UniProtKB-KW"/>
</dbReference>
<dbReference type="FunFam" id="1.20.1250.20:FF:000023">
    <property type="entry name" value="Solute carrier family 22 member 6"/>
    <property type="match status" value="1"/>
</dbReference>
<dbReference type="Gene3D" id="1.20.1250.20">
    <property type="entry name" value="MFS general substrate transporter like domains"/>
    <property type="match status" value="1"/>
</dbReference>
<dbReference type="InterPro" id="IPR020846">
    <property type="entry name" value="MFS_dom"/>
</dbReference>
<dbReference type="InterPro" id="IPR005828">
    <property type="entry name" value="MFS_sugar_transport-like"/>
</dbReference>
<dbReference type="InterPro" id="IPR036259">
    <property type="entry name" value="MFS_trans_sf"/>
</dbReference>
<dbReference type="InterPro" id="IPR004749">
    <property type="entry name" value="Orgcat_transp/SVOP"/>
</dbReference>
<dbReference type="InterPro" id="IPR005829">
    <property type="entry name" value="Sugar_transporter_CS"/>
</dbReference>
<dbReference type="NCBIfam" id="TIGR00898">
    <property type="entry name" value="2A0119"/>
    <property type="match status" value="1"/>
</dbReference>
<dbReference type="PANTHER" id="PTHR24064">
    <property type="entry name" value="SOLUTE CARRIER FAMILY 22 MEMBER"/>
    <property type="match status" value="1"/>
</dbReference>
<dbReference type="Pfam" id="PF00083">
    <property type="entry name" value="Sugar_tr"/>
    <property type="match status" value="1"/>
</dbReference>
<dbReference type="SUPFAM" id="SSF103473">
    <property type="entry name" value="MFS general substrate transporter"/>
    <property type="match status" value="1"/>
</dbReference>
<dbReference type="PROSITE" id="PS50850">
    <property type="entry name" value="MFS"/>
    <property type="match status" value="1"/>
</dbReference>
<evidence type="ECO:0000250" key="1"/>
<evidence type="ECO:0000250" key="2">
    <source>
        <dbReference type="UniProtKB" id="O88909"/>
    </source>
</evidence>
<evidence type="ECO:0000250" key="3">
    <source>
        <dbReference type="UniProtKB" id="Q8TCC7"/>
    </source>
</evidence>
<evidence type="ECO:0000250" key="4">
    <source>
        <dbReference type="UniProtKB" id="Q9R1U7"/>
    </source>
</evidence>
<evidence type="ECO:0000255" key="5"/>
<evidence type="ECO:0000256" key="6">
    <source>
        <dbReference type="SAM" id="MobiDB-lite"/>
    </source>
</evidence>
<evidence type="ECO:0000269" key="7">
    <source>
    </source>
</evidence>
<evidence type="ECO:0000305" key="8"/>
<evidence type="ECO:0000305" key="9">
    <source>
    </source>
</evidence>
<gene>
    <name type="primary">SLC22A8</name>
    <name type="synonym">OAT3</name>
</gene>
<comment type="function">
    <text evidence="2 3 4 7 9">Functions as an organic anion/dicarboxylate exchanger that couples organic anion uptake indirectly to the sodium gradient (By similarity). Transports organic anions such as estrone 3-sulfate (E1S) and urate in exchange for dicarboxylates such as glutarate or ketoglutarate (2-oxoglutarate) (Probable). Plays an important role in the excretion of endogenous and exogenous organic anions, especially from the kidney and the brain (PubMed:15820748). E1S transport is pH- and chloride-dependent and may also involve E1S/cGMP exchange (By similarity). Responsible for the transport of prostaglandin E2 (PGE2) and prostaglandin F2(alpha) (PGF2(alpha)) in the basolateral side of the renal tubule. Involved in the transport of neuroactive tryptophan metabolites kynurenate and xanthurenate. Functions as a biopterin transporters involved in the uptake and the secretion of coenzymes tetrahydrobiopterin (BH4), dihydrobiopterin (BH2) and sepiapterin to urine, thereby determining baseline levels of blood biopterins. May be involved in the basolateral transport of steviol, a metabolite of the popular sugar substitute stevioside. May participate in the detoxification/ renal excretion of drugs and xenobiotics, such as the histamine H(2)-receptor antagonists fexofenadine and cimetidine, the antibiotic benzylpenicillin (PCG), the anionic herbicide 2,4-dichloro-phenoxyacetate (2,4-D), the diagnostic agent p-aminohippurate (PAH), the antiviral acyclovir (ACV), and the mycotoxin ochratoxin (OTA), by transporting these exogenous organic anions across the cell membrane in exchange for dicarboxylates such as 2-oxoglutarate (By similarity). Contributes to the renal uptake of potent uremic toxins (indoxyl sulfate (IS), indole acetate (IA), hippurate/N-benzoylglycine (HA) and 3-carboxy-4-methyl-5-propyl-2-furanpropionate (CMPF)), pravastatin, PCG, E1S and dehydroepiandrosterone sulfate (DHEAS), and is partly involved in the renal uptake of temocaprilat (an angiotensin-converting enzyme (ACE) inhibitor) (By similarity). May contribute to the release of cortisol in the adrenals (By similarity). Involved in one of the detoxification systems on the choroid plexus (CP), removes substrates such as E1S or taurocholate (TC), PCG, 2,4-D and PAH, from the cerebrospinal fluid (CSF) to the blood for eventual excretion in urine and bile (By similarity). Also contributes to the uptake of several other organic compounds such as the prostanoids prostaglandin E(2) and prostaglandin F(2-alpha), L-carnitine, and the therapeutic drugs allopurinol, 6-mercaptopurine (6-MP) and 5-fluorouracil (5-FU) (By similarity). Mediates the transport of PAH, PCG, and the statins pravastatin and pitavastatin, from the cerebrum into the blood circulation across the blood-brain barrier (BBB). In summary, plays a role in the efflux of drugs and xenobiotics, helping reduce their undesired toxicological effects on the body (By similarity).</text>
</comment>
<comment type="catalytic activity">
    <reaction evidence="9">
        <text>estrone 3-sulfate(out) + glutarate(in) = estrone 3-sulfate(in) + glutarate(out)</text>
        <dbReference type="Rhea" id="RHEA:72151"/>
        <dbReference type="ChEBI" id="CHEBI:30921"/>
        <dbReference type="ChEBI" id="CHEBI:60050"/>
    </reaction>
</comment>
<comment type="catalytic activity">
    <reaction evidence="3">
        <text>estrone 3-sulfate(in) + 2-oxoglutarate(out) = estrone 3-sulfate(out) + 2-oxoglutarate(in)</text>
        <dbReference type="Rhea" id="RHEA:72399"/>
        <dbReference type="ChEBI" id="CHEBI:16810"/>
        <dbReference type="ChEBI" id="CHEBI:60050"/>
    </reaction>
</comment>
<comment type="catalytic activity">
    <reaction evidence="3">
        <text>glutarate(in) + 2-oxoglutarate(out) = glutarate(out) + 2-oxoglutarate(in)</text>
        <dbReference type="Rhea" id="RHEA:71751"/>
        <dbReference type="ChEBI" id="CHEBI:16810"/>
        <dbReference type="ChEBI" id="CHEBI:30921"/>
    </reaction>
</comment>
<comment type="catalytic activity">
    <reaction evidence="3">
        <text>urate(in) + 2-oxoglutarate(out) = urate(out) + 2-oxoglutarate(in)</text>
        <dbReference type="Rhea" id="RHEA:72403"/>
        <dbReference type="ChEBI" id="CHEBI:16810"/>
        <dbReference type="ChEBI" id="CHEBI:17775"/>
    </reaction>
</comment>
<comment type="catalytic activity">
    <reaction evidence="2">
        <text>taurocholate(out) + glutarate(in) = taurocholate(in) + glutarate(out)</text>
        <dbReference type="Rhea" id="RHEA:72159"/>
        <dbReference type="ChEBI" id="CHEBI:30921"/>
        <dbReference type="ChEBI" id="CHEBI:36257"/>
    </reaction>
</comment>
<comment type="catalytic activity">
    <reaction evidence="2">
        <text>dehydroepiandrosterone 3-sulfate(out) + glutarate(in) = dehydroepiandrosterone 3-sulfate(in) + glutarate(out)</text>
        <dbReference type="Rhea" id="RHEA:72355"/>
        <dbReference type="ChEBI" id="CHEBI:30921"/>
        <dbReference type="ChEBI" id="CHEBI:57905"/>
    </reaction>
</comment>
<comment type="catalytic activity">
    <reaction evidence="2">
        <text>prostaglandin F2alpha(out) + glutarate(in) = prostaglandin F2alpha(in) + glutarate(out)</text>
        <dbReference type="Rhea" id="RHEA:72503"/>
        <dbReference type="ChEBI" id="CHEBI:30921"/>
        <dbReference type="ChEBI" id="CHEBI:57404"/>
    </reaction>
</comment>
<comment type="catalytic activity">
    <reaction evidence="2">
        <text>prostaglandin F2alpha(out) + 2-oxoglutarate(in) = prostaglandin F2alpha(in) + 2-oxoglutarate(out)</text>
        <dbReference type="Rhea" id="RHEA:72507"/>
        <dbReference type="ChEBI" id="CHEBI:16810"/>
        <dbReference type="ChEBI" id="CHEBI:57404"/>
    </reaction>
</comment>
<comment type="catalytic activity">
    <reaction evidence="2">
        <text>(R)-carnitine(out) + 2-oxoglutarate(in) = (R)-carnitine(in) + 2-oxoglutarate(out)</text>
        <dbReference type="Rhea" id="RHEA:72511"/>
        <dbReference type="ChEBI" id="CHEBI:16347"/>
        <dbReference type="ChEBI" id="CHEBI:16810"/>
    </reaction>
</comment>
<comment type="catalytic activity">
    <reaction evidence="2">
        <text>glutarate(in) + (R)-carnitine(out) = glutarate(out) + (R)-carnitine(in)</text>
        <dbReference type="Rhea" id="RHEA:72515"/>
        <dbReference type="ChEBI" id="CHEBI:16347"/>
        <dbReference type="ChEBI" id="CHEBI:30921"/>
    </reaction>
</comment>
<comment type="catalytic activity">
    <reaction evidence="2">
        <text>prostaglandin E2(out) + 2-oxoglutarate(in) = prostaglandin E2(in) + 2-oxoglutarate(out)</text>
        <dbReference type="Rhea" id="RHEA:72499"/>
        <dbReference type="ChEBI" id="CHEBI:16810"/>
        <dbReference type="ChEBI" id="CHEBI:606564"/>
    </reaction>
</comment>
<comment type="catalytic activity">
    <reaction evidence="2">
        <text>prostaglandin E2(out) + glutarate(in) = prostaglandin E2(in) + glutarate(out)</text>
        <dbReference type="Rhea" id="RHEA:72495"/>
        <dbReference type="ChEBI" id="CHEBI:30921"/>
        <dbReference type="ChEBI" id="CHEBI:606564"/>
    </reaction>
</comment>
<comment type="catalytic activity">
    <reaction evidence="3">
        <text>urate(in) + glutarate(out) = urate(out) + glutarate(in)</text>
        <dbReference type="Rhea" id="RHEA:72551"/>
        <dbReference type="ChEBI" id="CHEBI:17775"/>
        <dbReference type="ChEBI" id="CHEBI:30921"/>
    </reaction>
</comment>
<comment type="catalytic activity">
    <reaction evidence="2">
        <text>taurocholate(out) + 2-oxoglutarate(in) = taurocholate(in) + 2-oxoglutarate(out)</text>
        <dbReference type="Rhea" id="RHEA:72547"/>
        <dbReference type="ChEBI" id="CHEBI:16810"/>
        <dbReference type="ChEBI" id="CHEBI:36257"/>
    </reaction>
</comment>
<comment type="catalytic activity">
    <reaction evidence="2">
        <text>dehydroepiandrosterone 3-sulfate(out) + 2-oxoglutarate(in) = dehydroepiandrosterone 3-sulfate(in) + 2-oxoglutarate(out)</text>
        <dbReference type="Rhea" id="RHEA:72543"/>
        <dbReference type="ChEBI" id="CHEBI:16810"/>
        <dbReference type="ChEBI" id="CHEBI:57905"/>
    </reaction>
</comment>
<comment type="catalytic activity">
    <reaction evidence="3">
        <text>kynurenate(out) + a dicarboxylate(in) = kynurenate(in) + a dicarboxylate(out)</text>
        <dbReference type="Rhea" id="RHEA:76087"/>
        <dbReference type="ChEBI" id="CHEBI:28965"/>
        <dbReference type="ChEBI" id="CHEBI:58454"/>
    </reaction>
</comment>
<comment type="catalytic activity">
    <reaction evidence="3">
        <text>(indol-3-yl)acetate(out) + a dicarboxylate(in) = (indol-3-yl)acetate(in) + a dicarboxylate(out)</text>
        <dbReference type="Rhea" id="RHEA:75983"/>
        <dbReference type="ChEBI" id="CHEBI:28965"/>
        <dbReference type="ChEBI" id="CHEBI:30854"/>
    </reaction>
</comment>
<comment type="catalytic activity">
    <reaction evidence="3">
        <text>indoxyl sulfate(out) + a dicarboxylate(in) = indoxyl sulfate(in) + a dicarboxylate(out)</text>
        <dbReference type="Rhea" id="RHEA:75987"/>
        <dbReference type="ChEBI" id="CHEBI:28965"/>
        <dbReference type="ChEBI" id="CHEBI:144643"/>
    </reaction>
</comment>
<comment type="catalytic activity">
    <reaction evidence="3">
        <text>N-benzoylglycine(out) + a dicarboxylate(in) = N-benzoylglycine(in) + a dicarboxylate(out)</text>
        <dbReference type="Rhea" id="RHEA:75991"/>
        <dbReference type="ChEBI" id="CHEBI:28965"/>
        <dbReference type="ChEBI" id="CHEBI:606565"/>
    </reaction>
</comment>
<comment type="catalytic activity">
    <reaction evidence="3">
        <text>3-carboxy-4-methyl-5-propyl-2-furanpropanoate(out) + a dicarboxylate(in) = 3-carboxy-4-methyl-5-propyl-2-furanpropanoate(in) + a dicarboxylate(out)</text>
        <dbReference type="Rhea" id="RHEA:75995"/>
        <dbReference type="ChEBI" id="CHEBI:28965"/>
        <dbReference type="ChEBI" id="CHEBI:194524"/>
    </reaction>
</comment>
<comment type="catalytic activity">
    <reaction evidence="3">
        <text>(6R)-L-erythro-5,6,7,8-tetrahydrobiopterin(out) + a dicarboxylate(in) = (6R)-L-erythro-5,6,7,8-tetrahydrobiopterin(in) + a dicarboxylate(out)</text>
        <dbReference type="Rhea" id="RHEA:76071"/>
        <dbReference type="ChEBI" id="CHEBI:28965"/>
        <dbReference type="ChEBI" id="CHEBI:59560"/>
    </reaction>
</comment>
<comment type="catalytic activity">
    <reaction evidence="3">
        <text>L-erythro-7,8-dihydrobiopterin(out) + a dicarboxylate(in) = L-erythro-7,8-dihydrobiopterin(in) + a dicarboxylate(out)</text>
        <dbReference type="Rhea" id="RHEA:76075"/>
        <dbReference type="ChEBI" id="CHEBI:28965"/>
        <dbReference type="ChEBI" id="CHEBI:43029"/>
    </reaction>
</comment>
<comment type="catalytic activity">
    <reaction evidence="3">
        <text>L-sepiapterin(out) + a dicarboxylate(in) = L-sepiapterin(in) + a dicarboxylate(out)</text>
        <dbReference type="Rhea" id="RHEA:76079"/>
        <dbReference type="ChEBI" id="CHEBI:28965"/>
        <dbReference type="ChEBI" id="CHEBI:194527"/>
    </reaction>
</comment>
<comment type="biophysicochemical properties">
    <kinetics>
        <KM evidence="7">7.8 uM for estrone 3-sulfate</KM>
    </kinetics>
</comment>
<comment type="subcellular location">
    <subcellularLocation>
        <location evidence="8">Basolateral cell membrane</location>
        <topology evidence="8">Multi-pass membrane protein</topology>
    </subcellularLocation>
    <text evidence="1">Localizes on the brush border membrane of the choroid epithelial cells. Localizes to the basolateral membrane of the proximal tubular cells. Localizes on the abluminal and possibly, luminal membrane of the brain capillary endothelial cells (BCEC) (By similarity).</text>
</comment>
<comment type="tissue specificity">
    <text evidence="9">Expressed in kidney.</text>
</comment>
<comment type="similarity">
    <text evidence="8">Belongs to the major facilitator (TC 2.A.1) superfamily. Organic cation transporter (TC 2.A.1.19) family.</text>
</comment>
<name>S22A8_PIG</name>
<sequence>MTFAELVDRVGSKGPFQLLHTVLLGLPILGMANHNLLQIFTAPTPAHHCRPPPNASAGPWVLPTGLNGKPETCLRFVYPPNASLPNDTRGATEPCLDGWIYNIVDRDSIVTEWDLVCSSSKLKEMAQSVFMAGILVGGLVLGALSDRFGRKPILIFSYLLLGASGSGAAFSPTFSIYAVFRFLCGFSISGISLSTAILNVEWVSTRFRAIKSIAVGFFYTFGQFILPGLAYAIPQWRWLQLTVSVPFLTFFLLSWWLPESIRWMVLSGKSSKALKTLRQVAIFNGKKEEGEKLSLEELKLNLQKEISLAKARHGIADLFRTPVLRRVTLCLSLAWFATGFAYYSLAMGVEEFGVNLYVLQLIFGGVDVPAKFITMLSISYLGRHITEGIVLLLAGGCILALIFVPLDLMTLRTVLAVFGKGCLSGSFSCLFLYTSELYPTVIRQTGMGASNLWARVGSMTAPLVKITGELQPFIPNIIFGTIALLGGSAALFLPETLNRPLPETIEDIETWSLRAKEPKPEPEAEKSSQRIPLQPCEPGPGPS</sequence>
<feature type="chain" id="PRO_0000273442" description="Organic anion transporter 3">
    <location>
        <begin position="1"/>
        <end position="543"/>
    </location>
</feature>
<feature type="topological domain" description="Cytoplasmic" evidence="5">
    <location>
        <begin position="1"/>
        <end position="21"/>
    </location>
</feature>
<feature type="transmembrane region" description="Helical" evidence="5">
    <location>
        <begin position="22"/>
        <end position="42"/>
    </location>
</feature>
<feature type="topological domain" description="Extracellular" evidence="5">
    <location>
        <begin position="43"/>
        <end position="124"/>
    </location>
</feature>
<feature type="transmembrane region" description="Helical" evidence="5">
    <location>
        <begin position="125"/>
        <end position="145"/>
    </location>
</feature>
<feature type="topological domain" description="Cytoplasmic" evidence="5">
    <location>
        <begin position="146"/>
        <end position="151"/>
    </location>
</feature>
<feature type="transmembrane region" description="Helical" evidence="5">
    <location>
        <begin position="152"/>
        <end position="172"/>
    </location>
</feature>
<feature type="topological domain" description="Extracellular" evidence="5">
    <location>
        <begin position="173"/>
        <end position="181"/>
    </location>
</feature>
<feature type="transmembrane region" description="Helical" evidence="5">
    <location>
        <begin position="182"/>
        <end position="202"/>
    </location>
</feature>
<feature type="topological domain" description="Cytoplasmic" evidence="5">
    <location>
        <begin position="203"/>
        <end position="212"/>
    </location>
</feature>
<feature type="transmembrane region" description="Helical" evidence="5">
    <location>
        <begin position="213"/>
        <end position="233"/>
    </location>
</feature>
<feature type="topological domain" description="Extracellular" evidence="5">
    <location>
        <begin position="234"/>
        <end position="237"/>
    </location>
</feature>
<feature type="transmembrane region" description="Helical" evidence="5">
    <location>
        <begin position="238"/>
        <end position="258"/>
    </location>
</feature>
<feature type="topological domain" description="Cytoplasmic" evidence="5">
    <location>
        <begin position="259"/>
        <end position="328"/>
    </location>
</feature>
<feature type="transmembrane region" description="Helical" evidence="5">
    <location>
        <begin position="329"/>
        <end position="349"/>
    </location>
</feature>
<feature type="topological domain" description="Extracellular" evidence="5">
    <location>
        <begin position="350"/>
        <end position="355"/>
    </location>
</feature>
<feature type="transmembrane region" description="Helical" evidence="5">
    <location>
        <begin position="356"/>
        <end position="376"/>
    </location>
</feature>
<feature type="topological domain" description="Cytoplasmic" evidence="5">
    <location>
        <begin position="377"/>
        <end position="388"/>
    </location>
</feature>
<feature type="transmembrane region" description="Helical" evidence="5">
    <location>
        <begin position="389"/>
        <end position="409"/>
    </location>
</feature>
<feature type="topological domain" description="Extracellular" evidence="5">
    <location>
        <begin position="410"/>
        <end position="412"/>
    </location>
</feature>
<feature type="transmembrane region" description="Helical" evidence="5">
    <location>
        <begin position="413"/>
        <end position="433"/>
    </location>
</feature>
<feature type="topological domain" description="Cytoplasmic" evidence="5">
    <location>
        <begin position="434"/>
        <end position="472"/>
    </location>
</feature>
<feature type="transmembrane region" description="Helical" evidence="5">
    <location>
        <begin position="473"/>
        <end position="493"/>
    </location>
</feature>
<feature type="topological domain" description="Extracellular" evidence="5">
    <location>
        <begin position="494"/>
        <end position="543"/>
    </location>
</feature>
<feature type="region of interest" description="Disordered" evidence="6">
    <location>
        <begin position="513"/>
        <end position="543"/>
    </location>
</feature>
<feature type="compositionally biased region" description="Basic and acidic residues" evidence="6">
    <location>
        <begin position="514"/>
        <end position="528"/>
    </location>
</feature>
<feature type="glycosylation site" description="N-linked (GlcNAc...) asparagine" evidence="5">
    <location>
        <position position="81"/>
    </location>
</feature>
<reference key="1">
    <citation type="submission" date="2003-10" db="EMBL/GenBank/DDBJ databases">
        <title>Cloning of the pig renal organic anion transporter 3 (pOAT3).</title>
        <authorList>
            <person name="Bahn A."/>
            <person name="Braun I.M."/>
            <person name="Burckhardt G."/>
            <person name="Krick W."/>
            <person name="Hagos Y."/>
        </authorList>
    </citation>
    <scope>NUCLEOTIDE SEQUENCE [MRNA]</scope>
    <source>
        <tissue>Kidney</tissue>
    </source>
</reference>
<reference key="2">
    <citation type="journal article" date="2005" name="Biochimie">
        <title>Functional expression of pig renal organic anion transporter 3 (pOAT3).</title>
        <authorList>
            <person name="Hagos Y."/>
            <person name="Braun I.M."/>
            <person name="Krick W."/>
            <person name="Burckhardt G."/>
            <person name="Bahn A."/>
        </authorList>
    </citation>
    <scope>NUCLEOTIDE SEQUENCE [MRNA]</scope>
    <scope>FUNCTION</scope>
    <scope>BIOPHYSICOCHEMICAL PROPERTIES</scope>
    <scope>TRANSPORTER ACTIVITY</scope>
    <scope>TISSUE SPECIFICITY</scope>
</reference>
<keyword id="KW-1003">Cell membrane</keyword>
<keyword id="KW-0216">Detoxification</keyword>
<keyword id="KW-0325">Glycoprotein</keyword>
<keyword id="KW-0406">Ion transport</keyword>
<keyword id="KW-0445">Lipid transport</keyword>
<keyword id="KW-0472">Membrane</keyword>
<keyword id="KW-1185">Reference proteome</keyword>
<keyword id="KW-0812">Transmembrane</keyword>
<keyword id="KW-1133">Transmembrane helix</keyword>
<keyword id="KW-0813">Transport</keyword>